<sequence>MLLKSLFLLFLTAIAFASELQIGILTSVPDDKCKVKSKPGDLISVHYEGKLEDGTVFDSSYSRGQPISFQLGIGQVIQGWDQGLTRMCIGEKRKLTIPSHLAYGDRGVGPIPAKATLVFVAELVDIAGSSKHDEL</sequence>
<accession>Q6BP84</accession>
<name>FKBP2_DEBHA</name>
<organism>
    <name type="scientific">Debaryomyces hansenii (strain ATCC 36239 / CBS 767 / BCRC 21394 / JCM 1990 / NBRC 0083 / IGC 2968)</name>
    <name type="common">Yeast</name>
    <name type="synonym">Torulaspora hansenii</name>
    <dbReference type="NCBI Taxonomy" id="284592"/>
    <lineage>
        <taxon>Eukaryota</taxon>
        <taxon>Fungi</taxon>
        <taxon>Dikarya</taxon>
        <taxon>Ascomycota</taxon>
        <taxon>Saccharomycotina</taxon>
        <taxon>Pichiomycetes</taxon>
        <taxon>Debaryomycetaceae</taxon>
        <taxon>Debaryomyces</taxon>
    </lineage>
</organism>
<protein>
    <recommendedName>
        <fullName>FK506-binding protein 2</fullName>
        <ecNumber>5.2.1.8</ecNumber>
    </recommendedName>
    <alternativeName>
        <fullName>Peptidyl-prolyl cis-trans isomerase</fullName>
        <shortName>PPIase</shortName>
    </alternativeName>
    <alternativeName>
        <fullName>Rotamase</fullName>
    </alternativeName>
</protein>
<keyword id="KW-0256">Endoplasmic reticulum</keyword>
<keyword id="KW-0413">Isomerase</keyword>
<keyword id="KW-1185">Reference proteome</keyword>
<keyword id="KW-0697">Rotamase</keyword>
<keyword id="KW-0732">Signal</keyword>
<dbReference type="EC" id="5.2.1.8"/>
<dbReference type="EMBL" id="CR382137">
    <property type="protein sequence ID" value="CAG88239.2"/>
    <property type="molecule type" value="Genomic_DNA"/>
</dbReference>
<dbReference type="RefSeq" id="XP_459986.2">
    <property type="nucleotide sequence ID" value="XM_459986.2"/>
</dbReference>
<dbReference type="SMR" id="Q6BP84"/>
<dbReference type="FunCoup" id="Q6BP84">
    <property type="interactions" value="589"/>
</dbReference>
<dbReference type="STRING" id="284592.Q6BP84"/>
<dbReference type="GeneID" id="2902171"/>
<dbReference type="KEGG" id="dha:DEHA2E15708g"/>
<dbReference type="VEuPathDB" id="FungiDB:DEHA2E15708g"/>
<dbReference type="eggNOG" id="KOG0549">
    <property type="taxonomic scope" value="Eukaryota"/>
</dbReference>
<dbReference type="HOGENOM" id="CLU_013615_8_2_1"/>
<dbReference type="InParanoid" id="Q6BP84"/>
<dbReference type="OMA" id="KPASCEI"/>
<dbReference type="OrthoDB" id="1902587at2759"/>
<dbReference type="Proteomes" id="UP000000599">
    <property type="component" value="Chromosome E"/>
</dbReference>
<dbReference type="GO" id="GO:0005783">
    <property type="term" value="C:endoplasmic reticulum"/>
    <property type="evidence" value="ECO:0007669"/>
    <property type="project" value="UniProtKB-SubCell"/>
</dbReference>
<dbReference type="GO" id="GO:0003755">
    <property type="term" value="F:peptidyl-prolyl cis-trans isomerase activity"/>
    <property type="evidence" value="ECO:0007669"/>
    <property type="project" value="UniProtKB-KW"/>
</dbReference>
<dbReference type="GO" id="GO:0061077">
    <property type="term" value="P:chaperone-mediated protein folding"/>
    <property type="evidence" value="ECO:0007669"/>
    <property type="project" value="InterPro"/>
</dbReference>
<dbReference type="FunFam" id="3.10.50.40:FF:000006">
    <property type="entry name" value="Peptidyl-prolyl cis-trans isomerase"/>
    <property type="match status" value="1"/>
</dbReference>
<dbReference type="Gene3D" id="3.10.50.40">
    <property type="match status" value="1"/>
</dbReference>
<dbReference type="InterPro" id="IPR044609">
    <property type="entry name" value="FKBP2/11"/>
</dbReference>
<dbReference type="InterPro" id="IPR046357">
    <property type="entry name" value="PPIase_dom_sf"/>
</dbReference>
<dbReference type="InterPro" id="IPR001179">
    <property type="entry name" value="PPIase_FKBP_dom"/>
</dbReference>
<dbReference type="PANTHER" id="PTHR45779">
    <property type="entry name" value="PEPTIDYLPROLYL ISOMERASE"/>
    <property type="match status" value="1"/>
</dbReference>
<dbReference type="PANTHER" id="PTHR45779:SF7">
    <property type="entry name" value="PEPTIDYLPROLYL ISOMERASE"/>
    <property type="match status" value="1"/>
</dbReference>
<dbReference type="Pfam" id="PF00254">
    <property type="entry name" value="FKBP_C"/>
    <property type="match status" value="1"/>
</dbReference>
<dbReference type="SUPFAM" id="SSF54534">
    <property type="entry name" value="FKBP-like"/>
    <property type="match status" value="1"/>
</dbReference>
<dbReference type="PROSITE" id="PS00014">
    <property type="entry name" value="ER_TARGET"/>
    <property type="match status" value="1"/>
</dbReference>
<dbReference type="PROSITE" id="PS50059">
    <property type="entry name" value="FKBP_PPIASE"/>
    <property type="match status" value="1"/>
</dbReference>
<feature type="signal peptide" evidence="2">
    <location>
        <begin position="1"/>
        <end position="17"/>
    </location>
</feature>
<feature type="chain" id="PRO_0000233067" description="FK506-binding protein 2">
    <location>
        <begin position="18"/>
        <end position="135"/>
    </location>
</feature>
<feature type="domain" description="PPIase FKBP-type" evidence="3">
    <location>
        <begin position="40"/>
        <end position="127"/>
    </location>
</feature>
<feature type="short sequence motif" description="Prevents secretion from ER" evidence="4">
    <location>
        <begin position="132"/>
        <end position="135"/>
    </location>
</feature>
<evidence type="ECO:0000250" key="1"/>
<evidence type="ECO:0000255" key="2"/>
<evidence type="ECO:0000255" key="3">
    <source>
        <dbReference type="PROSITE-ProRule" id="PRU00277"/>
    </source>
</evidence>
<evidence type="ECO:0000255" key="4">
    <source>
        <dbReference type="PROSITE-ProRule" id="PRU10138"/>
    </source>
</evidence>
<evidence type="ECO:0000305" key="5"/>
<reference key="1">
    <citation type="journal article" date="2004" name="Nature">
        <title>Genome evolution in yeasts.</title>
        <authorList>
            <person name="Dujon B."/>
            <person name="Sherman D."/>
            <person name="Fischer G."/>
            <person name="Durrens P."/>
            <person name="Casaregola S."/>
            <person name="Lafontaine I."/>
            <person name="de Montigny J."/>
            <person name="Marck C."/>
            <person name="Neuveglise C."/>
            <person name="Talla E."/>
            <person name="Goffard N."/>
            <person name="Frangeul L."/>
            <person name="Aigle M."/>
            <person name="Anthouard V."/>
            <person name="Babour A."/>
            <person name="Barbe V."/>
            <person name="Barnay S."/>
            <person name="Blanchin S."/>
            <person name="Beckerich J.-M."/>
            <person name="Beyne E."/>
            <person name="Bleykasten C."/>
            <person name="Boisrame A."/>
            <person name="Boyer J."/>
            <person name="Cattolico L."/>
            <person name="Confanioleri F."/>
            <person name="de Daruvar A."/>
            <person name="Despons L."/>
            <person name="Fabre E."/>
            <person name="Fairhead C."/>
            <person name="Ferry-Dumazet H."/>
            <person name="Groppi A."/>
            <person name="Hantraye F."/>
            <person name="Hennequin C."/>
            <person name="Jauniaux N."/>
            <person name="Joyet P."/>
            <person name="Kachouri R."/>
            <person name="Kerrest A."/>
            <person name="Koszul R."/>
            <person name="Lemaire M."/>
            <person name="Lesur I."/>
            <person name="Ma L."/>
            <person name="Muller H."/>
            <person name="Nicaud J.-M."/>
            <person name="Nikolski M."/>
            <person name="Oztas S."/>
            <person name="Ozier-Kalogeropoulos O."/>
            <person name="Pellenz S."/>
            <person name="Potier S."/>
            <person name="Richard G.-F."/>
            <person name="Straub M.-L."/>
            <person name="Suleau A."/>
            <person name="Swennen D."/>
            <person name="Tekaia F."/>
            <person name="Wesolowski-Louvel M."/>
            <person name="Westhof E."/>
            <person name="Wirth B."/>
            <person name="Zeniou-Meyer M."/>
            <person name="Zivanovic Y."/>
            <person name="Bolotin-Fukuhara M."/>
            <person name="Thierry A."/>
            <person name="Bouchier C."/>
            <person name="Caudron B."/>
            <person name="Scarpelli C."/>
            <person name="Gaillardin C."/>
            <person name="Weissenbach J."/>
            <person name="Wincker P."/>
            <person name="Souciet J.-L."/>
        </authorList>
    </citation>
    <scope>NUCLEOTIDE SEQUENCE [LARGE SCALE GENOMIC DNA]</scope>
    <source>
        <strain>ATCC 36239 / CBS 767 / BCRC 21394 / JCM 1990 / NBRC 0083 / IGC 2968</strain>
    </source>
</reference>
<reference key="2">
    <citation type="submission" date="2006-02" db="UniProtKB">
        <authorList>
            <person name="Pemberton T.J."/>
        </authorList>
    </citation>
    <scope>REVISION OF GENE MODEL</scope>
</reference>
<proteinExistence type="inferred from homology"/>
<comment type="function">
    <text evidence="1">PPIases accelerate the folding of proteins. It catalyzes the cis-trans isomerization of proline imidic peptide bonds in oligopeptides (By similarity).</text>
</comment>
<comment type="catalytic activity">
    <reaction>
        <text>[protein]-peptidylproline (omega=180) = [protein]-peptidylproline (omega=0)</text>
        <dbReference type="Rhea" id="RHEA:16237"/>
        <dbReference type="Rhea" id="RHEA-COMP:10747"/>
        <dbReference type="Rhea" id="RHEA-COMP:10748"/>
        <dbReference type="ChEBI" id="CHEBI:83833"/>
        <dbReference type="ChEBI" id="CHEBI:83834"/>
        <dbReference type="EC" id="5.2.1.8"/>
    </reaction>
</comment>
<comment type="activity regulation">
    <text evidence="1">Inhibited by both FK506 and rapamycin.</text>
</comment>
<comment type="subcellular location">
    <subcellularLocation>
        <location evidence="4">Endoplasmic reticulum</location>
    </subcellularLocation>
</comment>
<comment type="similarity">
    <text evidence="5">Belongs to the FKBP-type PPIase family. FKBP2 subfamily.</text>
</comment>
<gene>
    <name type="primary">FPR2</name>
    <name type="ordered locus">DEHA2E15708g</name>
</gene>